<name>CE162_COTCO</name>
<feature type="chain" id="PRO_0000295631" description="Centrosomal protein of 162 kDa">
    <location>
        <begin position="1" status="less than"/>
        <end position="1251"/>
    </location>
</feature>
<feature type="region of interest" description="Disordered" evidence="3">
    <location>
        <begin position="1"/>
        <end position="33"/>
    </location>
</feature>
<feature type="region of interest" description="Disordered" evidence="3">
    <location>
        <begin position="144"/>
        <end position="183"/>
    </location>
</feature>
<feature type="region of interest" description="Disordered" evidence="3">
    <location>
        <begin position="442"/>
        <end position="473"/>
    </location>
</feature>
<feature type="region of interest" description="Disordered" evidence="3">
    <location>
        <begin position="1078"/>
        <end position="1100"/>
    </location>
</feature>
<feature type="coiled-coil region" evidence="2">
    <location>
        <begin position="559"/>
        <end position="782"/>
    </location>
</feature>
<feature type="coiled-coil region" evidence="2">
    <location>
        <begin position="813"/>
        <end position="1165"/>
    </location>
</feature>
<feature type="coiled-coil region" evidence="2">
    <location>
        <begin position="1210"/>
        <end position="1242"/>
    </location>
</feature>
<feature type="compositionally biased region" description="Basic and acidic residues" evidence="3">
    <location>
        <begin position="1"/>
        <end position="19"/>
    </location>
</feature>
<feature type="compositionally biased region" description="Basic and acidic residues" evidence="3">
    <location>
        <begin position="144"/>
        <end position="159"/>
    </location>
</feature>
<feature type="compositionally biased region" description="Acidic residues" evidence="3">
    <location>
        <begin position="160"/>
        <end position="169"/>
    </location>
</feature>
<feature type="compositionally biased region" description="Low complexity" evidence="3">
    <location>
        <begin position="457"/>
        <end position="470"/>
    </location>
</feature>
<feature type="compositionally biased region" description="Basic and acidic residues" evidence="3">
    <location>
        <begin position="1082"/>
        <end position="1095"/>
    </location>
</feature>
<feature type="non-terminal residue">
    <location>
        <position position="1"/>
    </location>
</feature>
<evidence type="ECO:0000250" key="1"/>
<evidence type="ECO:0000255" key="2"/>
<evidence type="ECO:0000256" key="3">
    <source>
        <dbReference type="SAM" id="MobiDB-lite"/>
    </source>
</evidence>
<evidence type="ECO:0000269" key="4">
    <source>
    </source>
</evidence>
<evidence type="ECO:0000269" key="5">
    <source>
    </source>
</evidence>
<evidence type="ECO:0000305" key="6"/>
<evidence type="ECO:0000305" key="7">
    <source>
    </source>
</evidence>
<evidence type="ECO:0000305" key="8">
    <source>
    </source>
</evidence>
<reference key="1">
    <citation type="journal article" date="1993" name="Mech. Dev.">
        <title>A novel cDNA corresponding to transcripts expressed in retina post-mitotic neurons.</title>
        <authorList>
            <person name="Bidou L."/>
            <person name="Crisanti P."/>
            <person name="Blancher C."/>
            <person name="Pessac B."/>
        </authorList>
    </citation>
    <scope>NUCLEOTIDE SEQUENCE [MRNA]</scope>
    <scope>SUBCELLULAR LOCATION</scope>
    <scope>TISSUE SPECIFICITY</scope>
    <scope>DEVELOPMENTAL STAGE</scope>
    <source>
        <tissue>Neuroretina</tissue>
    </source>
</reference>
<reference key="2">
    <citation type="journal article" date="2001" name="Mech. Dev.">
        <title>Role of QN1 protein in cell proliferation arrest and differentiation during the neuroretina development.</title>
        <authorList>
            <person name="Neron B."/>
            <person name="Marx M."/>
            <person name="Crisanti P."/>
        </authorList>
    </citation>
    <scope>FUNCTION</scope>
    <scope>SUBCELLULAR LOCATION</scope>
    <scope>DEVELOPMENTAL STAGE</scope>
</reference>
<reference key="3">
    <citation type="journal article" date="2006" name="Oncogene">
        <title>QN1/KIAA1009: a new essential protein for chromosome segregation and mitotic spindle assembly.</title>
        <authorList>
            <person name="Leon A."/>
            <person name="Omri B."/>
            <person name="Gely A."/>
            <person name="Klein C."/>
            <person name="Crisanti P."/>
        </authorList>
    </citation>
    <scope>PRELIMINARY FUNCTION</scope>
</reference>
<organism>
    <name type="scientific">Coturnix coturnix</name>
    <name type="common">Common quail</name>
    <name type="synonym">Tetrao coturnix</name>
    <dbReference type="NCBI Taxonomy" id="9091"/>
    <lineage>
        <taxon>Eukaryota</taxon>
        <taxon>Metazoa</taxon>
        <taxon>Chordata</taxon>
        <taxon>Craniata</taxon>
        <taxon>Vertebrata</taxon>
        <taxon>Euteleostomi</taxon>
        <taxon>Archelosauria</taxon>
        <taxon>Archosauria</taxon>
        <taxon>Dinosauria</taxon>
        <taxon>Saurischia</taxon>
        <taxon>Theropoda</taxon>
        <taxon>Coelurosauria</taxon>
        <taxon>Aves</taxon>
        <taxon>Neognathae</taxon>
        <taxon>Galloanserae</taxon>
        <taxon>Galliformes</taxon>
        <taxon>Phasianidae</taxon>
        <taxon>Perdicinae</taxon>
        <taxon>Coturnix</taxon>
    </lineage>
</organism>
<protein>
    <recommendedName>
        <fullName>Centrosomal protein of 162 kDa</fullName>
        <shortName>Cep162</shortName>
    </recommendedName>
    <alternativeName>
        <fullName>Protein quail neuroretina 1</fullName>
    </alternativeName>
</protein>
<gene>
    <name type="primary">CEP162</name>
    <name type="synonym">QN1</name>
</gene>
<keyword id="KW-0970">Cilium biogenesis/degradation</keyword>
<keyword id="KW-0175">Coiled coil</keyword>
<keyword id="KW-0963">Cytoplasm</keyword>
<keyword id="KW-0206">Cytoskeleton</keyword>
<keyword id="KW-0493">Microtubule</keyword>
<keyword id="KW-0539">Nucleus</keyword>
<accession>Q91365</accession>
<comment type="function">
    <text evidence="1 4">Required to promote assembly of the transition zone in primary cilia. Acts by specifically recognizing and binding the axonemal microtubule (By similarity). Plays a role in cell proliferation and differentiation in the neuroretina. Has an ATPase activity in vitro.</text>
</comment>
<comment type="subcellular location">
    <subcellularLocation>
        <location evidence="1">Cytoplasm</location>
        <location evidence="1">Cytoskeleton</location>
        <location evidence="1">Microtubule organizing center</location>
        <location evidence="1">Centrosome</location>
        <location evidence="1">Centriole</location>
    </subcellularLocation>
    <subcellularLocation>
        <location evidence="4 5">Nucleus</location>
    </subcellularLocation>
    <text evidence="1">Localizes to the distal end of centrioles throughout the cell cycle.</text>
</comment>
<comment type="tissue specificity">
    <text evidence="5">Expressed in retina and brain (at protein level).</text>
</comment>
<comment type="developmental stage">
    <text evidence="4 5">Detected from 5 dpc onward in the neuroretina (at protein level).</text>
</comment>
<comment type="miscellaneous">
    <text evidence="7">Depletion of QN1 leads to retinal dysplasia.</text>
</comment>
<comment type="similarity">
    <text evidence="6">Belongs to the CEP162 family.</text>
</comment>
<comment type="caution">
    <text evidence="8">Was initially thought to regulate chromosome segregation and mitotic spindle assembly (PubMed:16302001). However, it was later shown that its absence neither affect mitosis nor centriole duplication.</text>
</comment>
<sequence length="1251" mass="143966">MLEKFHKNKKDSYLNKEEGSLTSDGSDSPKEILETSERIVKKALQLTEETDENVHPEKMQLQKSNGVAFSLSRDSLETNDSFVASGPNQSNTGLGLDTLEEQEEKEIFFAKLEQEASSPIDYSRLNKELNLSDSIVLAPFVRNESEKEVESTAEEKCESYSEDFEEDTDANPAFKTEESQEPNSGMLAKVVLLDSQDSTTEFQKAAETSGVALSEHDLPQEVGGTEMNEAGTLCGQTTSDTEALHHAYHHHIDQSLGDTDEQKIHSSSMAISQCLVQVTSQNHNLYSKNTSTTESDLPTVEEFMRPIKGDCYNARGFDLEPESPVKVIGSTVNEHVNHLPYKEHKNESVWETNLLEKFNREDSIFLQTAANEDSFLRMPGKEIQTSEVQPDVLSKEIIQDCLLSQGSKTKQVLQSCCLKNEKSESTTTKQMLYKNIRSTTPLHKKKSSYGPHGVVRSSGYGKSTSYSKQSIPATERKIPKETLKKSIMKCRSPADKARSKEALFTTRTIRSAANQQASKEDISRAMPDQSVVQNLGHQVVDSFRQHHSDLPVSPVKSCERELRLLRRAQVAEEDLSRARDVIQQLTSTVSEKEKEMETKIVELKTRYEKELSQLGQENYVLQSKLRSVEELSKEKRWIHQTGTVSVPEEKLAQIQKEMEDQEVIIQGYQQENERLYKQMKDLQIQNKKNEEQMYKENQCLMSELIALREKVERINIQSQIVRESEPARNQSFTELISELRAARKEETKLREEIRRLKQDKQALELDLGQAKKERDLAKVQITSTSSEKSYEFKIMEETYKQEILHLKRRLHWYAENQDLLDKDAARLKEAREEIEKLKQEVKKLRAEAGDHQCVQQKKRLRDRAADAKRIQDLERQIKEMEGILKRRYPNSLPALIYAAAAAEKTNDLSAKTNTTDFLERRIKKLETELEGKDDEAKTSLRAMEQQFQKIKMQYEQRLAELEQLLAYKWKSESPKLNGDKANCIELELQLQNLKKTHQITVENLQTEIENLKSQNSQLKLRSKKDNKDLQLADWQMKQGNTKEKLLKLNQELITKNREIQDLTKTVEKLQKERMAMLSDNNLRNKTDNKENRQESLKNNTVATEKRNSCNSEPLIGIFNNDKIYQPHNFSDSNVLEVLQENARLKEEVEKLSLEMNQQRVKSQATLAYSENNIRRIQEDTAEYVAALKASHQREVEKILSQYTKDDSASKVAELNGRISTQEILIKHLQEQISEHQRHQEALLVSQMREEF</sequence>
<dbReference type="EMBL" id="S68151">
    <property type="protein sequence ID" value="AAD14007.1"/>
    <property type="molecule type" value="mRNA"/>
</dbReference>
<dbReference type="PIR" id="A56677">
    <property type="entry name" value="A56677"/>
</dbReference>
<dbReference type="SMR" id="Q91365"/>
<dbReference type="GO" id="GO:0005879">
    <property type="term" value="C:axonemal microtubule"/>
    <property type="evidence" value="ECO:0000250"/>
    <property type="project" value="UniProtKB"/>
</dbReference>
<dbReference type="GO" id="GO:0034451">
    <property type="term" value="C:centriolar satellite"/>
    <property type="evidence" value="ECO:0007669"/>
    <property type="project" value="TreeGrafter"/>
</dbReference>
<dbReference type="GO" id="GO:0005814">
    <property type="term" value="C:centriole"/>
    <property type="evidence" value="ECO:0000250"/>
    <property type="project" value="UniProtKB"/>
</dbReference>
<dbReference type="GO" id="GO:0005654">
    <property type="term" value="C:nucleoplasm"/>
    <property type="evidence" value="ECO:0007669"/>
    <property type="project" value="TreeGrafter"/>
</dbReference>
<dbReference type="GO" id="GO:0060271">
    <property type="term" value="P:cilium assembly"/>
    <property type="evidence" value="ECO:0000250"/>
    <property type="project" value="UniProtKB"/>
</dbReference>
<dbReference type="InterPro" id="IPR038774">
    <property type="entry name" value="CEP162-like"/>
</dbReference>
<dbReference type="PANTHER" id="PTHR34031">
    <property type="entry name" value="CENTROSOMAL PROTEIN OF 162 KDA"/>
    <property type="match status" value="1"/>
</dbReference>
<dbReference type="PANTHER" id="PTHR34031:SF1">
    <property type="entry name" value="CENTROSOMAL PROTEIN OF 162 KDA"/>
    <property type="match status" value="1"/>
</dbReference>
<proteinExistence type="evidence at protein level"/>